<protein>
    <recommendedName>
        <fullName evidence="2">Protopolybia-mastoparan-III</fullName>
        <shortName evidence="3">Protopolybia-MP-III</shortName>
        <shortName evidence="2">Protopolybia-MPIII</shortName>
    </recommendedName>
</protein>
<keyword id="KW-0027">Amidation</keyword>
<keyword id="KW-0903">Direct protein sequencing</keyword>
<keyword id="KW-1213">G-protein coupled receptor impairing toxin</keyword>
<keyword id="KW-0467">Mast cell degranulation</keyword>
<keyword id="KW-0472">Membrane</keyword>
<keyword id="KW-0964">Secreted</keyword>
<keyword id="KW-1052">Target cell membrane</keyword>
<keyword id="KW-1053">Target membrane</keyword>
<keyword id="KW-0800">Toxin</keyword>
<accession>P69036</accession>
<dbReference type="IntAct" id="P69036">
    <property type="interactions" value="5"/>
</dbReference>
<dbReference type="GO" id="GO:0005576">
    <property type="term" value="C:extracellular region"/>
    <property type="evidence" value="ECO:0007669"/>
    <property type="project" value="UniProtKB-SubCell"/>
</dbReference>
<dbReference type="GO" id="GO:0016020">
    <property type="term" value="C:membrane"/>
    <property type="evidence" value="ECO:0007669"/>
    <property type="project" value="UniProtKB-KW"/>
</dbReference>
<dbReference type="GO" id="GO:0044218">
    <property type="term" value="C:other organism cell membrane"/>
    <property type="evidence" value="ECO:0007669"/>
    <property type="project" value="UniProtKB-KW"/>
</dbReference>
<dbReference type="GO" id="GO:0090729">
    <property type="term" value="F:toxin activity"/>
    <property type="evidence" value="ECO:0007669"/>
    <property type="project" value="UniProtKB-KW"/>
</dbReference>
<dbReference type="InterPro" id="IPR013214">
    <property type="entry name" value="Mastoparan_peptide"/>
</dbReference>
<dbReference type="Pfam" id="PF08251">
    <property type="entry name" value="Mastoparan_2"/>
    <property type="match status" value="1"/>
</dbReference>
<reference key="1">
    <citation type="journal article" date="2005" name="Toxicon">
        <title>Structural and biological characterization of three novel mastoparan peptides from the venom of the neotropical social wasp Protopolybia exigua (Saussure).</title>
        <authorList>
            <person name="Mendes M.A."/>
            <person name="de Souza B.M."/>
            <person name="Palma M.S."/>
        </authorList>
    </citation>
    <scope>PROTEIN SEQUENCE</scope>
    <scope>FUNCTION</scope>
    <scope>SYNTHESIS</scope>
    <scope>MASS SPECTROMETRY</scope>
    <scope>SUBCELLULAR LOCATION</scope>
    <scope>AMIDATION AT LEU-14</scope>
    <source>
        <tissue>Venom</tissue>
    </source>
</reference>
<name>MAST3_PROEX</name>
<proteinExistence type="evidence at protein level"/>
<organism>
    <name type="scientific">Protopolybia exigua</name>
    <name type="common">Neotropical social wasp</name>
    <dbReference type="NCBI Taxonomy" id="91439"/>
    <lineage>
        <taxon>Eukaryota</taxon>
        <taxon>Metazoa</taxon>
        <taxon>Ecdysozoa</taxon>
        <taxon>Arthropoda</taxon>
        <taxon>Hexapoda</taxon>
        <taxon>Insecta</taxon>
        <taxon>Pterygota</taxon>
        <taxon>Neoptera</taxon>
        <taxon>Endopterygota</taxon>
        <taxon>Hymenoptera</taxon>
        <taxon>Apocrita</taxon>
        <taxon>Aculeata</taxon>
        <taxon>Vespoidea</taxon>
        <taxon>Vespidae</taxon>
        <taxon>Polistinae</taxon>
        <taxon>Epiponini</taxon>
        <taxon>Protopolybia</taxon>
    </lineage>
</organism>
<evidence type="ECO:0000269" key="1">
    <source>
    </source>
</evidence>
<evidence type="ECO:0000303" key="2">
    <source>
    </source>
</evidence>
<evidence type="ECO:0000305" key="3"/>
<evidence type="ECO:0000305" key="4">
    <source>
    </source>
</evidence>
<comment type="function">
    <text evidence="1">Mast cell degranulating peptide. Activates G proteins (Gi component), which in turn activates the cascade of molecular events cAMP-regulated, resulting in mast cell degranulation.</text>
</comment>
<comment type="subcellular location">
    <subcellularLocation>
        <location evidence="1">Secreted</location>
    </subcellularLocation>
    <subcellularLocation>
        <location evidence="4">Target cell membrane</location>
    </subcellularLocation>
    <text evidence="4">Assumes an amphipathic alpha-helical conformation in a membrane-like environment.</text>
</comment>
<comment type="tissue specificity">
    <text evidence="4">Expressed by the venom gland.</text>
</comment>
<comment type="mass spectrometry"/>
<comment type="similarity">
    <text evidence="3">Belongs to the MCD family. Mastoparan subfamily.</text>
</comment>
<sequence>INWLKLGKAVIDAL</sequence>
<feature type="peptide" id="PRO_0000044057" description="Protopolybia-mastoparan-III" evidence="1">
    <location>
        <begin position="1"/>
        <end position="14"/>
    </location>
</feature>
<feature type="modified residue" description="Leucine amide" evidence="1">
    <location>
        <position position="14"/>
    </location>
</feature>